<protein>
    <recommendedName>
        <fullName>Phytoene desaturase</fullName>
        <ecNumber>1.3.99.30</ecNumber>
    </recommendedName>
    <alternativeName>
        <fullName>Phytoene desaturase (3,4-didehydrolycopene-forming)</fullName>
    </alternativeName>
</protein>
<proteinExistence type="inferred from homology"/>
<feature type="signal peptide" evidence="2">
    <location>
        <begin position="1"/>
        <end position="23"/>
    </location>
</feature>
<feature type="chain" id="PRO_0000067694" description="Phytoene desaturase">
    <location>
        <begin position="24"/>
        <end position="621"/>
    </location>
</feature>
<feature type="transmembrane region" description="Helical" evidence="2">
    <location>
        <begin position="598"/>
        <end position="618"/>
    </location>
</feature>
<feature type="region of interest" description="Disordered" evidence="3">
    <location>
        <begin position="394"/>
        <end position="425"/>
    </location>
</feature>
<feature type="compositionally biased region" description="Polar residues" evidence="3">
    <location>
        <begin position="397"/>
        <end position="414"/>
    </location>
</feature>
<gene>
    <name type="primary">PDH1</name>
</gene>
<organism>
    <name type="scientific">Cercospora nicotianae</name>
    <name type="common">Barn spot disease fungus</name>
    <dbReference type="NCBI Taxonomy" id="29003"/>
    <lineage>
        <taxon>Eukaryota</taxon>
        <taxon>Fungi</taxon>
        <taxon>Dikarya</taxon>
        <taxon>Ascomycota</taxon>
        <taxon>Pezizomycotina</taxon>
        <taxon>Dothideomycetes</taxon>
        <taxon>Dothideomycetidae</taxon>
        <taxon>Mycosphaerellales</taxon>
        <taxon>Mycosphaerellaceae</taxon>
        <taxon>Cercospora</taxon>
    </lineage>
</organism>
<dbReference type="EC" id="1.3.99.30"/>
<dbReference type="EMBL" id="U03903">
    <property type="protein sequence ID" value="AAB86988.1"/>
    <property type="molecule type" value="Genomic_DNA"/>
</dbReference>
<dbReference type="PIR" id="T48646">
    <property type="entry name" value="T48646"/>
</dbReference>
<dbReference type="SMR" id="P48537"/>
<dbReference type="UniPathway" id="UPA00803"/>
<dbReference type="GO" id="GO:0016020">
    <property type="term" value="C:membrane"/>
    <property type="evidence" value="ECO:0007669"/>
    <property type="project" value="UniProtKB-SubCell"/>
</dbReference>
<dbReference type="GO" id="GO:0016627">
    <property type="term" value="F:oxidoreductase activity, acting on the CH-CH group of donors"/>
    <property type="evidence" value="ECO:0007669"/>
    <property type="project" value="UniProtKB-ARBA"/>
</dbReference>
<dbReference type="GO" id="GO:0016117">
    <property type="term" value="P:carotenoid biosynthetic process"/>
    <property type="evidence" value="ECO:0007669"/>
    <property type="project" value="UniProtKB-KW"/>
</dbReference>
<dbReference type="FunFam" id="3.50.50.60:FF:000171">
    <property type="entry name" value="zeta-carotene-forming phytoene desaturase"/>
    <property type="match status" value="1"/>
</dbReference>
<dbReference type="Gene3D" id="3.50.50.60">
    <property type="entry name" value="FAD/NAD(P)-binding domain"/>
    <property type="match status" value="2"/>
</dbReference>
<dbReference type="InterPro" id="IPR002937">
    <property type="entry name" value="Amino_oxidase"/>
</dbReference>
<dbReference type="InterPro" id="IPR014105">
    <property type="entry name" value="Carotenoid/retinoid_OxRdtase"/>
</dbReference>
<dbReference type="InterPro" id="IPR036188">
    <property type="entry name" value="FAD/NAD-bd_sf"/>
</dbReference>
<dbReference type="InterPro" id="IPR008150">
    <property type="entry name" value="Phytoene_DH_bac_CS"/>
</dbReference>
<dbReference type="NCBIfam" id="TIGR02734">
    <property type="entry name" value="crtI_fam"/>
    <property type="match status" value="1"/>
</dbReference>
<dbReference type="PANTHER" id="PTHR43734">
    <property type="entry name" value="PHYTOENE DESATURASE"/>
    <property type="match status" value="1"/>
</dbReference>
<dbReference type="PANTHER" id="PTHR43734:SF1">
    <property type="entry name" value="PHYTOENE DESATURASE"/>
    <property type="match status" value="1"/>
</dbReference>
<dbReference type="Pfam" id="PF01593">
    <property type="entry name" value="Amino_oxidase"/>
    <property type="match status" value="1"/>
</dbReference>
<dbReference type="SUPFAM" id="SSF51905">
    <property type="entry name" value="FAD/NAD(P)-binding domain"/>
    <property type="match status" value="1"/>
</dbReference>
<dbReference type="PROSITE" id="PS00982">
    <property type="entry name" value="PHYTOENE_DH"/>
    <property type="match status" value="1"/>
</dbReference>
<name>CRTI_CERNC</name>
<evidence type="ECO:0000250" key="1"/>
<evidence type="ECO:0000255" key="2"/>
<evidence type="ECO:0000256" key="3">
    <source>
        <dbReference type="SAM" id="MobiDB-lite"/>
    </source>
</evidence>
<evidence type="ECO:0000305" key="4"/>
<sequence>MPSTSKRPTAIVIGSGVGGVSTAARLARAGFHVTVLEKNNFTGGRCSLIHHEGYRFDQGPSLLLLPGLFHRTFAELGTSLEQEGVKLLKCEPNYMIHFSDGEKFTLSSDLSVMKTEVEKWEGKEGYTRYLEFLKESHGHYELSVREVLLRNFEGLTAMLRPEFLRHLLQLHPFESIWTRAGKYFWTERLRRVFTFGSMYMGMSPFDAPGTYSLLQYTELAEGIWYPVGGFHRVVEALVKIGEREGVDFRMETAVKKILLSEDGGVAKGVELEDGRRLEADVVVNNSDLVYAYEKLLPIKTPYAESLKGRPGSCSSISFYWALDRQVPELEAHNIFLADEYRESFDSIFKKHLIPDEPSFYVNVPSRVDSTAAPEGKDSVVVLVPVGHLLEEDRHASQAHQLSASRNGHISSASPPDQPGLTPTEKQDWPAMISLARKTILSTIQSRTNVDLTPLIIHESTNSPLSWKQTFNLDRGAILGLSHSFFNVLCFRPTTRARKPGAFDAQLLKFGVLGRAAEVIIDAFRGRGKDIKGLYMVGASAHPGTGVPICLAGGALVAEQICGDYGVDIPWKEEERKGRDVGGKRKLDVLESPMWLDSWEQWVSVLIYLLVGIFAWLWMKFR</sequence>
<reference key="1">
    <citation type="journal article" date="1994" name="Appl. Environ. Microbiol.">
        <title>Isolation, sequence, and characterization of the Cercospora nicotianae phytoene dehydrogenase gene.</title>
        <authorList>
            <person name="Ehrenshaft M."/>
            <person name="Daub M.E."/>
        </authorList>
    </citation>
    <scope>NUCLEOTIDE SEQUENCE [GENOMIC DNA]</scope>
    <source>
        <strain>ATCC 18366</strain>
    </source>
</reference>
<comment type="function">
    <text evidence="1">Phytoene desaturase involved in the carotenoid biosynthesis pathway. Converts phytoene into 3,4-didehydrolycopene via the intermediary of phytofluene, zeta-carotene, neurosporene and lycopene, by introducing up to five double bonds into phytoene (By similarity).</text>
</comment>
<comment type="catalytic activity">
    <reaction>
        <text>15-cis-phytoene + 5 A = all-trans-3,4-didehydrolycopene + 5 AH2</text>
        <dbReference type="Rhea" id="RHEA:30975"/>
        <dbReference type="ChEBI" id="CHEBI:13193"/>
        <dbReference type="ChEBI" id="CHEBI:17499"/>
        <dbReference type="ChEBI" id="CHEBI:27787"/>
        <dbReference type="ChEBI" id="CHEBI:62474"/>
        <dbReference type="EC" id="1.3.99.30"/>
    </reaction>
</comment>
<comment type="cofactor">
    <cofactor evidence="1">
        <name>NAD(+)</name>
        <dbReference type="ChEBI" id="CHEBI:57540"/>
    </cofactor>
</comment>
<comment type="pathway">
    <text>Carotenoid biosynthesis; lycopene biosynthesis.</text>
</comment>
<comment type="subcellular location">
    <subcellularLocation>
        <location evidence="4">Membrane</location>
        <topology evidence="4">Single-pass membrane protein</topology>
    </subcellularLocation>
</comment>
<comment type="similarity">
    <text evidence="4">Belongs to the carotenoid/retinoid oxidoreductase family.</text>
</comment>
<accession>P48537</accession>
<keyword id="KW-0125">Carotenoid biosynthesis</keyword>
<keyword id="KW-0472">Membrane</keyword>
<keyword id="KW-0520">NAD</keyword>
<keyword id="KW-0560">Oxidoreductase</keyword>
<keyword id="KW-0732">Signal</keyword>
<keyword id="KW-0812">Transmembrane</keyword>
<keyword id="KW-1133">Transmembrane helix</keyword>